<comment type="function">
    <text evidence="1">Catalyzes the sequential NAD-dependent oxidations of L-histidinol to L-histidinaldehyde and then to L-histidine.</text>
</comment>
<comment type="catalytic activity">
    <reaction evidence="1">
        <text>L-histidinol + 2 NAD(+) + H2O = L-histidine + 2 NADH + 3 H(+)</text>
        <dbReference type="Rhea" id="RHEA:20641"/>
        <dbReference type="ChEBI" id="CHEBI:15377"/>
        <dbReference type="ChEBI" id="CHEBI:15378"/>
        <dbReference type="ChEBI" id="CHEBI:57540"/>
        <dbReference type="ChEBI" id="CHEBI:57595"/>
        <dbReference type="ChEBI" id="CHEBI:57699"/>
        <dbReference type="ChEBI" id="CHEBI:57945"/>
        <dbReference type="EC" id="1.1.1.23"/>
    </reaction>
</comment>
<comment type="cofactor">
    <cofactor evidence="1">
        <name>Zn(2+)</name>
        <dbReference type="ChEBI" id="CHEBI:29105"/>
    </cofactor>
    <text evidence="1">Binds 1 zinc ion per subunit.</text>
</comment>
<comment type="pathway">
    <text evidence="1">Amino-acid biosynthesis; L-histidine biosynthesis; L-histidine from 5-phospho-alpha-D-ribose 1-diphosphate: step 9/9.</text>
</comment>
<comment type="similarity">
    <text evidence="1">Belongs to the histidinol dehydrogenase family.</text>
</comment>
<reference key="1">
    <citation type="journal article" date="2003" name="Proc. Natl. Acad. Sci. U.S.A.">
        <title>Complete genome sequence of Lactobacillus plantarum WCFS1.</title>
        <authorList>
            <person name="Kleerebezem M."/>
            <person name="Boekhorst J."/>
            <person name="van Kranenburg R."/>
            <person name="Molenaar D."/>
            <person name="Kuipers O.P."/>
            <person name="Leer R."/>
            <person name="Tarchini R."/>
            <person name="Peters S.A."/>
            <person name="Sandbrink H.M."/>
            <person name="Fiers M.W.E.J."/>
            <person name="Stiekema W."/>
            <person name="Klein Lankhorst R.M."/>
            <person name="Bron P.A."/>
            <person name="Hoffer S.M."/>
            <person name="Nierop Groot M.N."/>
            <person name="Kerkhoven R."/>
            <person name="De Vries M."/>
            <person name="Ursing B."/>
            <person name="De Vos W.M."/>
            <person name="Siezen R.J."/>
        </authorList>
    </citation>
    <scope>NUCLEOTIDE SEQUENCE [LARGE SCALE GENOMIC DNA]</scope>
    <source>
        <strain>ATCC BAA-793 / NCIMB 8826 / WCFS1</strain>
    </source>
</reference>
<reference key="2">
    <citation type="journal article" date="2012" name="J. Bacteriol.">
        <title>Complete resequencing and reannotation of the Lactobacillus plantarum WCFS1 genome.</title>
        <authorList>
            <person name="Siezen R.J."/>
            <person name="Francke C."/>
            <person name="Renckens B."/>
            <person name="Boekhorst J."/>
            <person name="Wels M."/>
            <person name="Kleerebezem M."/>
            <person name="van Hijum S.A."/>
        </authorList>
    </citation>
    <scope>NUCLEOTIDE SEQUENCE [LARGE SCALE GENOMIC DNA]</scope>
    <scope>GENOME REANNOTATION</scope>
    <source>
        <strain>ATCC BAA-793 / NCIMB 8826 / WCFS1</strain>
    </source>
</reference>
<evidence type="ECO:0000255" key="1">
    <source>
        <dbReference type="HAMAP-Rule" id="MF_01024"/>
    </source>
</evidence>
<sequence length="428" mass="45986">MKIINEDLASLKRLVQTKTQQLTDLKVESAVREIIANVIKNGDAAVKDYETQFDKVTLTDFKLSQTVIDDAYNNLDPQVKDALLLAKRNITSFHEKEKATGFIDAEQPGVLRGQKLMPLNRVGLYVPGGTAAYPSTLLMSALPAKIAGVNEVIMVTPPQVDGINPAVLAAAKIAGVDAIYQVGGAQAIAALAYGTESIPAVDKIIGPGNIFVATAKKQVFGQVAIDMVAGPSEIGILADDSADPRQLAADLLSQAEHDRRARPILITDSADLAQAVSDNVTSQLKVLPREAIATDAVNEKGFIAVVAKIEEMFDLMNTVAPEHLEVQLKNPTQYLNLIKNAGSVFLGRYASEPLGDYVAGPNHILPTSGTARFSSPLGVYDFVKRTSFIQYTKDALAKEAPAITTLARVEGLEGHARAIESRFDTYYD</sequence>
<name>HISX_LACPL</name>
<dbReference type="EC" id="1.1.1.23" evidence="1"/>
<dbReference type="EMBL" id="AL935263">
    <property type="protein sequence ID" value="CCC79714.1"/>
    <property type="molecule type" value="Genomic_DNA"/>
</dbReference>
<dbReference type="RefSeq" id="WP_011101827.1">
    <property type="nucleotide sequence ID" value="NC_004567.2"/>
</dbReference>
<dbReference type="RefSeq" id="YP_004890228.1">
    <property type="nucleotide sequence ID" value="NC_004567.2"/>
</dbReference>
<dbReference type="SMR" id="P59399"/>
<dbReference type="STRING" id="220668.lp_2559"/>
<dbReference type="EnsemblBacteria" id="CCC79714">
    <property type="protein sequence ID" value="CCC79714"/>
    <property type="gene ID" value="lp_2559"/>
</dbReference>
<dbReference type="KEGG" id="lpl:lp_2559"/>
<dbReference type="PATRIC" id="fig|220668.9.peg.2150"/>
<dbReference type="eggNOG" id="COG0141">
    <property type="taxonomic scope" value="Bacteria"/>
</dbReference>
<dbReference type="HOGENOM" id="CLU_006732_3_3_9"/>
<dbReference type="OrthoDB" id="9805269at2"/>
<dbReference type="PhylomeDB" id="P59399"/>
<dbReference type="UniPathway" id="UPA00031">
    <property type="reaction ID" value="UER00014"/>
</dbReference>
<dbReference type="Proteomes" id="UP000000432">
    <property type="component" value="Chromosome"/>
</dbReference>
<dbReference type="GO" id="GO:0005829">
    <property type="term" value="C:cytosol"/>
    <property type="evidence" value="ECO:0007669"/>
    <property type="project" value="TreeGrafter"/>
</dbReference>
<dbReference type="GO" id="GO:0004399">
    <property type="term" value="F:histidinol dehydrogenase activity"/>
    <property type="evidence" value="ECO:0007669"/>
    <property type="project" value="UniProtKB-UniRule"/>
</dbReference>
<dbReference type="GO" id="GO:0051287">
    <property type="term" value="F:NAD binding"/>
    <property type="evidence" value="ECO:0007669"/>
    <property type="project" value="InterPro"/>
</dbReference>
<dbReference type="GO" id="GO:0008270">
    <property type="term" value="F:zinc ion binding"/>
    <property type="evidence" value="ECO:0007669"/>
    <property type="project" value="UniProtKB-UniRule"/>
</dbReference>
<dbReference type="GO" id="GO:0000105">
    <property type="term" value="P:L-histidine biosynthetic process"/>
    <property type="evidence" value="ECO:0007669"/>
    <property type="project" value="UniProtKB-UniRule"/>
</dbReference>
<dbReference type="CDD" id="cd06572">
    <property type="entry name" value="Histidinol_dh"/>
    <property type="match status" value="1"/>
</dbReference>
<dbReference type="FunFam" id="3.40.50.1980:FF:000001">
    <property type="entry name" value="Histidinol dehydrogenase"/>
    <property type="match status" value="1"/>
</dbReference>
<dbReference type="FunFam" id="3.40.50.1980:FF:000026">
    <property type="entry name" value="Histidinol dehydrogenase"/>
    <property type="match status" value="1"/>
</dbReference>
<dbReference type="FunFam" id="1.20.5.1300:FF:000002">
    <property type="entry name" value="Histidinol dehydrogenase, chloroplastic"/>
    <property type="match status" value="1"/>
</dbReference>
<dbReference type="Gene3D" id="1.20.5.1300">
    <property type="match status" value="1"/>
</dbReference>
<dbReference type="Gene3D" id="3.40.50.1980">
    <property type="entry name" value="Nitrogenase molybdenum iron protein domain"/>
    <property type="match status" value="2"/>
</dbReference>
<dbReference type="HAMAP" id="MF_01024">
    <property type="entry name" value="HisD"/>
    <property type="match status" value="1"/>
</dbReference>
<dbReference type="InterPro" id="IPR016161">
    <property type="entry name" value="Ald_DH/histidinol_DH"/>
</dbReference>
<dbReference type="InterPro" id="IPR001692">
    <property type="entry name" value="Histidinol_DH_CS"/>
</dbReference>
<dbReference type="InterPro" id="IPR022695">
    <property type="entry name" value="Histidinol_DH_monofunct"/>
</dbReference>
<dbReference type="InterPro" id="IPR012131">
    <property type="entry name" value="Hstdl_DH"/>
</dbReference>
<dbReference type="NCBIfam" id="TIGR00069">
    <property type="entry name" value="hisD"/>
    <property type="match status" value="1"/>
</dbReference>
<dbReference type="PANTHER" id="PTHR21256:SF2">
    <property type="entry name" value="HISTIDINE BIOSYNTHESIS TRIFUNCTIONAL PROTEIN"/>
    <property type="match status" value="1"/>
</dbReference>
<dbReference type="PANTHER" id="PTHR21256">
    <property type="entry name" value="HISTIDINOL DEHYDROGENASE HDH"/>
    <property type="match status" value="1"/>
</dbReference>
<dbReference type="Pfam" id="PF00815">
    <property type="entry name" value="Histidinol_dh"/>
    <property type="match status" value="1"/>
</dbReference>
<dbReference type="PIRSF" id="PIRSF000099">
    <property type="entry name" value="Histidinol_dh"/>
    <property type="match status" value="1"/>
</dbReference>
<dbReference type="PRINTS" id="PR00083">
    <property type="entry name" value="HOLDHDRGNASE"/>
</dbReference>
<dbReference type="SUPFAM" id="SSF53720">
    <property type="entry name" value="ALDH-like"/>
    <property type="match status" value="1"/>
</dbReference>
<dbReference type="PROSITE" id="PS00611">
    <property type="entry name" value="HISOL_DEHYDROGENASE"/>
    <property type="match status" value="1"/>
</dbReference>
<organism>
    <name type="scientific">Lactiplantibacillus plantarum (strain ATCC BAA-793 / NCIMB 8826 / WCFS1)</name>
    <name type="common">Lactobacillus plantarum</name>
    <dbReference type="NCBI Taxonomy" id="220668"/>
    <lineage>
        <taxon>Bacteria</taxon>
        <taxon>Bacillati</taxon>
        <taxon>Bacillota</taxon>
        <taxon>Bacilli</taxon>
        <taxon>Lactobacillales</taxon>
        <taxon>Lactobacillaceae</taxon>
        <taxon>Lactiplantibacillus</taxon>
    </lineage>
</organism>
<keyword id="KW-0028">Amino-acid biosynthesis</keyword>
<keyword id="KW-0368">Histidine biosynthesis</keyword>
<keyword id="KW-0479">Metal-binding</keyword>
<keyword id="KW-0520">NAD</keyword>
<keyword id="KW-0560">Oxidoreductase</keyword>
<keyword id="KW-1185">Reference proteome</keyword>
<keyword id="KW-0862">Zinc</keyword>
<feature type="chain" id="PRO_0000135782" description="Histidinol dehydrogenase">
    <location>
        <begin position="1"/>
        <end position="428"/>
    </location>
</feature>
<feature type="active site" description="Proton acceptor" evidence="1">
    <location>
        <position position="322"/>
    </location>
</feature>
<feature type="active site" description="Proton acceptor" evidence="1">
    <location>
        <position position="323"/>
    </location>
</feature>
<feature type="binding site" evidence="1">
    <location>
        <position position="125"/>
    </location>
    <ligand>
        <name>NAD(+)</name>
        <dbReference type="ChEBI" id="CHEBI:57540"/>
    </ligand>
</feature>
<feature type="binding site" evidence="1">
    <location>
        <position position="186"/>
    </location>
    <ligand>
        <name>NAD(+)</name>
        <dbReference type="ChEBI" id="CHEBI:57540"/>
    </ligand>
</feature>
<feature type="binding site" evidence="1">
    <location>
        <position position="209"/>
    </location>
    <ligand>
        <name>NAD(+)</name>
        <dbReference type="ChEBI" id="CHEBI:57540"/>
    </ligand>
</feature>
<feature type="binding site" evidence="1">
    <location>
        <position position="232"/>
    </location>
    <ligand>
        <name>substrate</name>
    </ligand>
</feature>
<feature type="binding site" evidence="1">
    <location>
        <position position="254"/>
    </location>
    <ligand>
        <name>substrate</name>
    </ligand>
</feature>
<feature type="binding site" evidence="1">
    <location>
        <position position="254"/>
    </location>
    <ligand>
        <name>Zn(2+)</name>
        <dbReference type="ChEBI" id="CHEBI:29105"/>
    </ligand>
</feature>
<feature type="binding site" evidence="1">
    <location>
        <position position="257"/>
    </location>
    <ligand>
        <name>substrate</name>
    </ligand>
</feature>
<feature type="binding site" evidence="1">
    <location>
        <position position="257"/>
    </location>
    <ligand>
        <name>Zn(2+)</name>
        <dbReference type="ChEBI" id="CHEBI:29105"/>
    </ligand>
</feature>
<feature type="binding site" evidence="1">
    <location>
        <position position="323"/>
    </location>
    <ligand>
        <name>substrate</name>
    </ligand>
</feature>
<feature type="binding site" evidence="1">
    <location>
        <position position="356"/>
    </location>
    <ligand>
        <name>substrate</name>
    </ligand>
</feature>
<feature type="binding site" evidence="1">
    <location>
        <position position="356"/>
    </location>
    <ligand>
        <name>Zn(2+)</name>
        <dbReference type="ChEBI" id="CHEBI:29105"/>
    </ligand>
</feature>
<feature type="binding site" evidence="1">
    <location>
        <position position="410"/>
    </location>
    <ligand>
        <name>substrate</name>
    </ligand>
</feature>
<feature type="binding site" evidence="1">
    <location>
        <position position="415"/>
    </location>
    <ligand>
        <name>substrate</name>
    </ligand>
</feature>
<feature type="binding site" evidence="1">
    <location>
        <position position="415"/>
    </location>
    <ligand>
        <name>Zn(2+)</name>
        <dbReference type="ChEBI" id="CHEBI:29105"/>
    </ligand>
</feature>
<protein>
    <recommendedName>
        <fullName evidence="1">Histidinol dehydrogenase</fullName>
        <shortName evidence="1">HDH</shortName>
        <ecNumber evidence="1">1.1.1.23</ecNumber>
    </recommendedName>
</protein>
<gene>
    <name evidence="1" type="primary">hisD</name>
    <name type="ordered locus">lp_2559</name>
</gene>
<accession>P59399</accession>
<accession>F9UR75</accession>
<proteinExistence type="inferred from homology"/>